<comment type="function">
    <text evidence="1">Acts on phosphatidylinositol (PI) in the first committed step in the production of the second messenger inositol 1,4,5,-trisphosphate.</text>
</comment>
<comment type="catalytic activity">
    <reaction>
        <text>a 1,2-diacyl-sn-glycero-3-phospho-(1D-myo-inositol) + ATP = a 1,2-diacyl-sn-glycero-3-phospho-(1D-myo-inositol 4-phosphate) + ADP + H(+)</text>
        <dbReference type="Rhea" id="RHEA:19877"/>
        <dbReference type="ChEBI" id="CHEBI:15378"/>
        <dbReference type="ChEBI" id="CHEBI:30616"/>
        <dbReference type="ChEBI" id="CHEBI:57880"/>
        <dbReference type="ChEBI" id="CHEBI:58178"/>
        <dbReference type="ChEBI" id="CHEBI:456216"/>
        <dbReference type="EC" id="2.7.1.67"/>
    </reaction>
</comment>
<comment type="subcellular location">
    <subcellularLocation>
        <location evidence="1">Nucleus</location>
    </subcellularLocation>
</comment>
<comment type="miscellaneous">
    <text evidence="5">The C.albicans mating-type-like (MTL) locus contains, in addition to the genes for the regulatory proteins (MTLA1, MTLA2, MTLALPHA1 and MTLALPHA2), a and alpha idiomorphs of a phosphatidylinositol kinase (PIKA and PIKALPHA), a poly(A) polymerase (PAPA and PAPALPHA) and an oxysterol binding protein-like protein (OBPA and OBPALPHA). PIKALPHA is not represented in the genomic sequence of strain SC5314 because that haploid assembly includes the mating type a allele of this locus.</text>
</comment>
<comment type="similarity">
    <text evidence="5">Belongs to the PI3/PI4-kinase family. Type III PI4K subfamily.</text>
</comment>
<protein>
    <recommendedName>
        <fullName>Phosphatidylinositol 4-kinase PIK1alpha</fullName>
        <shortName>PI4-kinase</shortName>
        <shortName>PtdIns-4-kinase</shortName>
        <ecNumber>2.7.1.67</ecNumber>
    </recommendedName>
</protein>
<organism>
    <name type="scientific">Candida albicans (strain SC5314 / ATCC MYA-2876)</name>
    <name type="common">Yeast</name>
    <dbReference type="NCBI Taxonomy" id="237561"/>
    <lineage>
        <taxon>Eukaryota</taxon>
        <taxon>Fungi</taxon>
        <taxon>Dikarya</taxon>
        <taxon>Ascomycota</taxon>
        <taxon>Saccharomycotina</taxon>
        <taxon>Pichiomycetes</taxon>
        <taxon>Debaryomycetaceae</taxon>
        <taxon>Candida/Lodderomyces clade</taxon>
        <taxon>Candida</taxon>
    </lineage>
</organism>
<name>PIK1_CANAL</name>
<proteinExistence type="inferred from homology"/>
<dbReference type="EC" id="2.7.1.67"/>
<dbReference type="EMBL" id="AF167163">
    <property type="protein sequence ID" value="AAD51410.1"/>
    <property type="molecule type" value="Genomic_DNA"/>
</dbReference>
<dbReference type="EMBL" id="AJ011588">
    <property type="protein sequence ID" value="CAA09718.1"/>
    <property type="molecule type" value="Genomic_DNA"/>
</dbReference>
<dbReference type="CGD" id="CAL0000202032">
    <property type="gene designation" value="PIKALPHA"/>
</dbReference>
<dbReference type="eggNOG" id="KOG0903">
    <property type="taxonomic scope" value="Eukaryota"/>
</dbReference>
<dbReference type="HOGENOM" id="CLU_002446_2_0_1"/>
<dbReference type="OMA" id="ANYFRCE"/>
<dbReference type="GO" id="GO:0005634">
    <property type="term" value="C:nucleus"/>
    <property type="evidence" value="ECO:0007669"/>
    <property type="project" value="UniProtKB-SubCell"/>
</dbReference>
<dbReference type="GO" id="GO:0004430">
    <property type="term" value="F:1-phosphatidylinositol 4-kinase activity"/>
    <property type="evidence" value="ECO:0007669"/>
    <property type="project" value="UniProtKB-EC"/>
</dbReference>
<dbReference type="GO" id="GO:0005524">
    <property type="term" value="F:ATP binding"/>
    <property type="evidence" value="ECO:0007669"/>
    <property type="project" value="UniProtKB-KW"/>
</dbReference>
<dbReference type="GO" id="GO:0044182">
    <property type="term" value="P:filamentous growth of a population of unicellular organisms"/>
    <property type="evidence" value="ECO:0000316"/>
    <property type="project" value="CGD"/>
</dbReference>
<dbReference type="GO" id="GO:0043001">
    <property type="term" value="P:Golgi to plasma membrane protein transport"/>
    <property type="evidence" value="ECO:0000316"/>
    <property type="project" value="CGD"/>
</dbReference>
<dbReference type="GO" id="GO:0046854">
    <property type="term" value="P:phosphatidylinositol phosphate biosynthetic process"/>
    <property type="evidence" value="ECO:0007669"/>
    <property type="project" value="InterPro"/>
</dbReference>
<dbReference type="GO" id="GO:0044011">
    <property type="term" value="P:single-species biofilm formation on inanimate substrate"/>
    <property type="evidence" value="ECO:0000315"/>
    <property type="project" value="CGD"/>
</dbReference>
<dbReference type="CDD" id="cd05168">
    <property type="entry name" value="PI4Kc_III_beta"/>
    <property type="match status" value="1"/>
</dbReference>
<dbReference type="FunFam" id="3.30.1010.10:FF:000021">
    <property type="entry name" value="Phosphatidylinositol 4-kinase"/>
    <property type="match status" value="1"/>
</dbReference>
<dbReference type="FunFam" id="1.10.1070.11:FF:000016">
    <property type="entry name" value="PIK1p Phosphatidylinositol 4-kinase"/>
    <property type="match status" value="1"/>
</dbReference>
<dbReference type="Gene3D" id="6.10.140.1260">
    <property type="match status" value="1"/>
</dbReference>
<dbReference type="Gene3D" id="1.10.1070.11">
    <property type="entry name" value="Phosphatidylinositol 3-/4-kinase, catalytic domain"/>
    <property type="match status" value="1"/>
</dbReference>
<dbReference type="Gene3D" id="3.30.1010.10">
    <property type="entry name" value="Phosphatidylinositol 3-kinase Catalytic Subunit, Chain A, domain 4"/>
    <property type="match status" value="1"/>
</dbReference>
<dbReference type="InterPro" id="IPR016024">
    <property type="entry name" value="ARM-type_fold"/>
</dbReference>
<dbReference type="InterPro" id="IPR011009">
    <property type="entry name" value="Kinase-like_dom_sf"/>
</dbReference>
<dbReference type="InterPro" id="IPR021601">
    <property type="entry name" value="Phosphatidylino_kinase_fungi"/>
</dbReference>
<dbReference type="InterPro" id="IPR000403">
    <property type="entry name" value="PI3/4_kinase_cat_dom"/>
</dbReference>
<dbReference type="InterPro" id="IPR036940">
    <property type="entry name" value="PI3/4_kinase_cat_sf"/>
</dbReference>
<dbReference type="InterPro" id="IPR018936">
    <property type="entry name" value="PI3/4_kinase_CS"/>
</dbReference>
<dbReference type="InterPro" id="IPR001263">
    <property type="entry name" value="PI3K_accessory_dom"/>
</dbReference>
<dbReference type="InterPro" id="IPR049160">
    <property type="entry name" value="PI4KB-PIK1_PIK"/>
</dbReference>
<dbReference type="InterPro" id="IPR015433">
    <property type="entry name" value="PI_Kinase"/>
</dbReference>
<dbReference type="PANTHER" id="PTHR10048:SF22">
    <property type="entry name" value="PHOSPHATIDYLINOSITOL 4-KINASE BETA"/>
    <property type="match status" value="1"/>
</dbReference>
<dbReference type="PANTHER" id="PTHR10048">
    <property type="entry name" value="PHOSPHATIDYLINOSITOL KINASE"/>
    <property type="match status" value="1"/>
</dbReference>
<dbReference type="Pfam" id="PF00454">
    <property type="entry name" value="PI3_PI4_kinase"/>
    <property type="match status" value="1"/>
</dbReference>
<dbReference type="Pfam" id="PF21245">
    <property type="entry name" value="PI4KB-PIK1_PIK"/>
    <property type="match status" value="1"/>
</dbReference>
<dbReference type="Pfam" id="PF11522">
    <property type="entry name" value="Pik1"/>
    <property type="match status" value="1"/>
</dbReference>
<dbReference type="SMART" id="SM00146">
    <property type="entry name" value="PI3Kc"/>
    <property type="match status" value="1"/>
</dbReference>
<dbReference type="SUPFAM" id="SSF48371">
    <property type="entry name" value="ARM repeat"/>
    <property type="match status" value="1"/>
</dbReference>
<dbReference type="SUPFAM" id="SSF56112">
    <property type="entry name" value="Protein kinase-like (PK-like)"/>
    <property type="match status" value="1"/>
</dbReference>
<dbReference type="PROSITE" id="PS00916">
    <property type="entry name" value="PI3_4_KINASE_2"/>
    <property type="match status" value="1"/>
</dbReference>
<dbReference type="PROSITE" id="PS50290">
    <property type="entry name" value="PI3_4_KINASE_3"/>
    <property type="match status" value="1"/>
</dbReference>
<dbReference type="PROSITE" id="PS51545">
    <property type="entry name" value="PIK_HELICAL"/>
    <property type="match status" value="1"/>
</dbReference>
<feature type="chain" id="PRO_0000088832" description="Phosphatidylinositol 4-kinase PIK1alpha">
    <location>
        <begin position="1"/>
        <end position="977"/>
    </location>
</feature>
<feature type="domain" description="PIK helical" evidence="3">
    <location>
        <begin position="1"/>
        <end position="125"/>
    </location>
</feature>
<feature type="domain" description="PI3K/PI4K catalytic" evidence="2">
    <location>
        <begin position="679"/>
        <end position="960"/>
    </location>
</feature>
<feature type="region of interest" description="Disordered" evidence="4">
    <location>
        <begin position="205"/>
        <end position="261"/>
    </location>
</feature>
<feature type="region of interest" description="G-loop" evidence="2">
    <location>
        <begin position="685"/>
        <end position="691"/>
    </location>
</feature>
<feature type="region of interest" description="Catalytic loop" evidence="2">
    <location>
        <begin position="826"/>
        <end position="834"/>
    </location>
</feature>
<feature type="region of interest" description="Activation loop" evidence="2">
    <location>
        <begin position="845"/>
        <end position="869"/>
    </location>
</feature>
<feature type="compositionally biased region" description="Polar residues" evidence="4">
    <location>
        <begin position="220"/>
        <end position="233"/>
    </location>
</feature>
<feature type="compositionally biased region" description="Acidic residues" evidence="4">
    <location>
        <begin position="250"/>
        <end position="261"/>
    </location>
</feature>
<feature type="sequence conflict" description="In Ref. 2; CAA09718." evidence="5" ref="2">
    <original>R</original>
    <variation>G</variation>
    <location>
        <position position="87"/>
    </location>
</feature>
<feature type="sequence conflict" description="In Ref. 2; CAA09718." evidence="5" ref="2">
    <original>S</original>
    <variation>A</variation>
    <location>
        <position position="582"/>
    </location>
</feature>
<keyword id="KW-0067">ATP-binding</keyword>
<keyword id="KW-0418">Kinase</keyword>
<keyword id="KW-0547">Nucleotide-binding</keyword>
<keyword id="KW-0539">Nucleus</keyword>
<keyword id="KW-0808">Transferase</keyword>
<reference key="1">
    <citation type="journal article" date="1999" name="Science">
        <title>Identification of a mating type-like locus in the asexual pathogenic yeast Candida albicans.</title>
        <authorList>
            <person name="Hull C.M."/>
            <person name="Johnson A.D."/>
        </authorList>
    </citation>
    <scope>NUCLEOTIDE SEQUENCE [GENOMIC DNA]</scope>
    <source>
        <strain>SC5314 / ATCC MYA-2876</strain>
    </source>
</reference>
<reference key="2">
    <citation type="submission" date="1998-09" db="EMBL/GenBank/DDBJ databases">
        <title>Cloning and sequencing of a C. albicans phosphatidylinositol 4-kinase.</title>
        <authorList>
            <person name="Gamo F.J."/>
            <person name="Garcia-Bustos J.F."/>
        </authorList>
    </citation>
    <scope>NUCLEOTIDE SEQUENCE [GENOMIC DNA]</scope>
</reference>
<evidence type="ECO:0000250" key="1"/>
<evidence type="ECO:0000255" key="2">
    <source>
        <dbReference type="PROSITE-ProRule" id="PRU00269"/>
    </source>
</evidence>
<evidence type="ECO:0000255" key="3">
    <source>
        <dbReference type="PROSITE-ProRule" id="PRU00878"/>
    </source>
</evidence>
<evidence type="ECO:0000256" key="4">
    <source>
        <dbReference type="SAM" id="MobiDB-lite"/>
    </source>
</evidence>
<evidence type="ECO:0000305" key="5"/>
<evidence type="ECO:0000312" key="6">
    <source>
        <dbReference type="CGD" id="CAL0000202032"/>
    </source>
</evidence>
<accession>Q9UW20</accession>
<accession>O74714</accession>
<accession>Q59YW7</accession>
<gene>
    <name type="primary">PIKALPHA</name>
    <name type="synonym">PIK1</name>
    <name evidence="6" type="ordered locus">C5_01765C_B</name>
    <name type="ORF">CaO19.10711</name>
</gene>
<sequence>MSADITETPNKQLLEQIRSPSFSLFNCIYELKNHTDSIGIQHELVKKLYSFPYEDLQFFIPQFVQLLVTYDSESMALEEFIITYSSRYPHFSLIVFWNLQAYIFELKNEPESRSFQAVRNLITKIQNIMFNADQQTVKAPEFRENFLPALVLCGAVASSVLLPSFKSYCLPMIKAQGKQQKSLVFKLVNFQKSLTKNLTLKNQRMSADIPKGSHSDDETATSSSIKPSLSRSASVPRRNTKKTSLSFSSDESEAYTTDDDDNKTSIELEKDFYKIDLDGLSKEKSANFLEPEENLNVNTAIKSKKRLSTLTSKVMTQPWNGIDGYNVNSQSLPDLSKAEGRDLIPFISSTESETSLLYHNNSISNDLQKNIPRQQKFSPGFDNVYLTKLLQVNYAKNETQFIMALQNISIRLSQVPKEARLSALRAELSIINDTLLPSEIDIPQLLPITSNRNKKYHKILKLNVNEASVLNSAERVPFLLFIEYLSDEIDFNPTTEYNQRIIARKKMNGATSMTVKKINSFSEVADGNFEKENKIKSSTPETVSNIIYNENTEEADLSEMPLDRKTTVSSDSFSPEMLVTPSITEQSKLSNFPSLNTKEVSTKVLADQMRIAAVMLQQLDSSGKANSEQSFLIKNRIVESMIALQDQFDSFDFEKLSQLQSDEPSAGERKLENDFKLGEDWNTKKQRIKKSSAYGHLKNWDLCSVIAKNGDDLPQEAFACQLISMISNIWKKNNIPVWTKRMKILITSANTGLVETITNAMSIHSIKKSFTEHSIKSGENSKGKIFTLLDYFHSVFGSPNSTSFRTAQQNFAKSLAAYSIICYVLQIKDRHNGNIMVDGDGHIIHIDFGFLLSNSPGSVGFEAAPFKLTVEYVELLGGVDSEIYSQFVYLCKQCFKSLRDNSEEIIEIVELMQKDSTLPCFNNGENTSVLLKQRLQLQLNDEDTDQFVENFLIGKSLGSMYTRLYDQFQMITQGIYS</sequence>